<name>FLIG_RHIME</name>
<feature type="chain" id="PRO_0000184093" description="Flagellar motor switch protein FliG">
    <location>
        <begin position="1"/>
        <end position="345"/>
    </location>
</feature>
<feature type="short sequence motif" description="Part of the EHPQR-motif">
    <location>
        <begin position="139"/>
        <end position="142"/>
    </location>
</feature>
<feature type="site" description="Part of the EHPQR-motif">
    <location>
        <position position="174"/>
    </location>
</feature>
<feature type="sequence conflict" description="In Ref. 1; CAA11952." evidence="2" ref="1">
    <original>G</original>
    <variation>C</variation>
    <location>
        <position position="156"/>
    </location>
</feature>
<feature type="sequence conflict" description="In Ref. 1; CAA11952." evidence="2" ref="1">
    <original>P</original>
    <variation>A</variation>
    <location>
        <position position="183"/>
    </location>
</feature>
<feature type="sequence conflict" description="In Ref. 1; CAA11952." evidence="2" ref="1">
    <original>AD</original>
    <variation>TE</variation>
    <location>
        <begin position="202"/>
        <end position="203"/>
    </location>
</feature>
<feature type="sequence conflict" description="In Ref. 1; CAA11952." evidence="2" ref="1">
    <original>V</original>
    <variation>A</variation>
    <location>
        <position position="239"/>
    </location>
</feature>
<feature type="sequence conflict" description="In Ref. 1; CAA11952." evidence="2" ref="1">
    <original>T</original>
    <variation>A</variation>
    <location>
        <position position="269"/>
    </location>
</feature>
<keyword id="KW-0975">Bacterial flagellum</keyword>
<keyword id="KW-0997">Cell inner membrane</keyword>
<keyword id="KW-1003">Cell membrane</keyword>
<keyword id="KW-0145">Chemotaxis</keyword>
<keyword id="KW-0283">Flagellar rotation</keyword>
<keyword id="KW-0472">Membrane</keyword>
<keyword id="KW-1185">Reference proteome</keyword>
<accession>O54244</accession>
<dbReference type="EMBL" id="AJ224445">
    <property type="protein sequence ID" value="CAA11952.1"/>
    <property type="molecule type" value="Genomic_DNA"/>
</dbReference>
<dbReference type="EMBL" id="AL591688">
    <property type="protein sequence ID" value="CAC45223.1"/>
    <property type="molecule type" value="Genomic_DNA"/>
</dbReference>
<dbReference type="RefSeq" id="NP_384757.1">
    <property type="nucleotide sequence ID" value="NC_003047.1"/>
</dbReference>
<dbReference type="RefSeq" id="WP_003529920.1">
    <property type="nucleotide sequence ID" value="NC_003047.1"/>
</dbReference>
<dbReference type="SMR" id="O54244"/>
<dbReference type="EnsemblBacteria" id="CAC45223">
    <property type="protein sequence ID" value="CAC45223"/>
    <property type="gene ID" value="SMc03019"/>
</dbReference>
<dbReference type="KEGG" id="sme:SMc03019"/>
<dbReference type="PATRIC" id="fig|266834.11.peg.2025"/>
<dbReference type="eggNOG" id="COG1536">
    <property type="taxonomic scope" value="Bacteria"/>
</dbReference>
<dbReference type="HOGENOM" id="CLU_047835_0_1_5"/>
<dbReference type="OrthoDB" id="9780302at2"/>
<dbReference type="Proteomes" id="UP000001976">
    <property type="component" value="Chromosome"/>
</dbReference>
<dbReference type="GO" id="GO:0009425">
    <property type="term" value="C:bacterial-type flagellum basal body"/>
    <property type="evidence" value="ECO:0007669"/>
    <property type="project" value="UniProtKB-SubCell"/>
</dbReference>
<dbReference type="GO" id="GO:0005886">
    <property type="term" value="C:plasma membrane"/>
    <property type="evidence" value="ECO:0007669"/>
    <property type="project" value="UniProtKB-SubCell"/>
</dbReference>
<dbReference type="GO" id="GO:0003774">
    <property type="term" value="F:cytoskeletal motor activity"/>
    <property type="evidence" value="ECO:0007669"/>
    <property type="project" value="InterPro"/>
</dbReference>
<dbReference type="GO" id="GO:0071973">
    <property type="term" value="P:bacterial-type flagellum-dependent cell motility"/>
    <property type="evidence" value="ECO:0007669"/>
    <property type="project" value="InterPro"/>
</dbReference>
<dbReference type="GO" id="GO:0006935">
    <property type="term" value="P:chemotaxis"/>
    <property type="evidence" value="ECO:0007669"/>
    <property type="project" value="UniProtKB-KW"/>
</dbReference>
<dbReference type="Gene3D" id="1.10.220.30">
    <property type="match status" value="3"/>
</dbReference>
<dbReference type="InterPro" id="IPR000090">
    <property type="entry name" value="Flg_Motor_Flig"/>
</dbReference>
<dbReference type="InterPro" id="IPR023087">
    <property type="entry name" value="Flg_Motor_Flig_C"/>
</dbReference>
<dbReference type="InterPro" id="IPR011002">
    <property type="entry name" value="FliG_a-hlx"/>
</dbReference>
<dbReference type="InterPro" id="IPR032779">
    <property type="entry name" value="FliG_M"/>
</dbReference>
<dbReference type="InterPro" id="IPR028263">
    <property type="entry name" value="FliG_N"/>
</dbReference>
<dbReference type="NCBIfam" id="NF004260">
    <property type="entry name" value="PRK05686.2-1"/>
    <property type="match status" value="1"/>
</dbReference>
<dbReference type="PANTHER" id="PTHR30534">
    <property type="entry name" value="FLAGELLAR MOTOR SWITCH PROTEIN FLIG"/>
    <property type="match status" value="1"/>
</dbReference>
<dbReference type="PANTHER" id="PTHR30534:SF0">
    <property type="entry name" value="FLAGELLAR MOTOR SWITCH PROTEIN FLIG"/>
    <property type="match status" value="1"/>
</dbReference>
<dbReference type="Pfam" id="PF01706">
    <property type="entry name" value="FliG_C"/>
    <property type="match status" value="1"/>
</dbReference>
<dbReference type="Pfam" id="PF14841">
    <property type="entry name" value="FliG_M"/>
    <property type="match status" value="1"/>
</dbReference>
<dbReference type="Pfam" id="PF14842">
    <property type="entry name" value="FliG_N"/>
    <property type="match status" value="1"/>
</dbReference>
<dbReference type="PRINTS" id="PR00954">
    <property type="entry name" value="FLGMOTORFLIG"/>
</dbReference>
<dbReference type="SUPFAM" id="SSF48029">
    <property type="entry name" value="FliG"/>
    <property type="match status" value="2"/>
</dbReference>
<evidence type="ECO:0000250" key="1"/>
<evidence type="ECO:0000305" key="2"/>
<organism>
    <name type="scientific">Rhizobium meliloti (strain 1021)</name>
    <name type="common">Ensifer meliloti</name>
    <name type="synonym">Sinorhizobium meliloti</name>
    <dbReference type="NCBI Taxonomy" id="266834"/>
    <lineage>
        <taxon>Bacteria</taxon>
        <taxon>Pseudomonadati</taxon>
        <taxon>Pseudomonadota</taxon>
        <taxon>Alphaproteobacteria</taxon>
        <taxon>Hyphomicrobiales</taxon>
        <taxon>Rhizobiaceae</taxon>
        <taxon>Sinorhizobium/Ensifer group</taxon>
        <taxon>Sinorhizobium</taxon>
    </lineage>
</organism>
<comment type="function">
    <text evidence="1">FliG is one of three proteins (FliG, FliN, FliM) that forms the rotor-mounted switch complex (C ring), located at the base of the basal body. This complex interacts with the CheY and CheZ chemotaxis proteins, in addition to contacting components of the motor that determine the direction of flagellar rotation (By similarity).</text>
</comment>
<comment type="subcellular location">
    <subcellularLocation>
        <location evidence="1">Cell inner membrane</location>
        <topology evidence="1">Peripheral membrane protein</topology>
        <orientation evidence="1">Cytoplasmic side</orientation>
    </subcellularLocation>
    <subcellularLocation>
        <location evidence="1">Bacterial flagellum basal body</location>
    </subcellularLocation>
</comment>
<comment type="similarity">
    <text evidence="2">Belongs to the FliG family.</text>
</comment>
<proteinExistence type="inferred from homology"/>
<sequence>MTDFGSFEAQAQALAQPLSQTEKAAAVLLAMGKSIAGKLLKFFTQSELQAIIAAAQSLRAVPPHELEALVNEFEDLFTEGAGLMDNAKAMESILEEGLTPDEVDGLLGRRATFQSYEASIWDRLMDCDPVIIAQLLAREHPQTIAYVLSMMPSSFGAKVLLQLSDKQRPEILNRAVNIKNVNPKAAAIIEARVIEIIEEMEADRNSPGPAKIAEVMNELEKPQVDTLLASLETISTDSVKKVRPKIFLFDDILFMPQRSRVQLFNDVSTDVITMALRGSAAELRESILASIGARQRRMIESDLAAGDAGINPRDIAIARRSITQEAIRLSASGQLELKEKEPEAA</sequence>
<reference key="1">
    <citation type="journal article" date="1998" name="Gene">
        <title>Mapping of 41 chemotaxis, flagellar and motility genes to a single region of the Sinorhizobium meliloti chromosome.</title>
        <authorList>
            <person name="Sourjik V."/>
            <person name="Sterr W."/>
            <person name="Platzer J."/>
            <person name="Bos I."/>
            <person name="Haslbeck M."/>
            <person name="Schmitt R."/>
        </authorList>
    </citation>
    <scope>NUCLEOTIDE SEQUENCE [GENOMIC DNA]</scope>
    <source>
        <strain>RU11/001</strain>
    </source>
</reference>
<reference key="2">
    <citation type="journal article" date="2001" name="Proc. Natl. Acad. Sci. U.S.A.">
        <title>Analysis of the chromosome sequence of the legume symbiont Sinorhizobium meliloti strain 1021.</title>
        <authorList>
            <person name="Capela D."/>
            <person name="Barloy-Hubler F."/>
            <person name="Gouzy J."/>
            <person name="Bothe G."/>
            <person name="Ampe F."/>
            <person name="Batut J."/>
            <person name="Boistard P."/>
            <person name="Becker A."/>
            <person name="Boutry M."/>
            <person name="Cadieu E."/>
            <person name="Dreano S."/>
            <person name="Gloux S."/>
            <person name="Godrie T."/>
            <person name="Goffeau A."/>
            <person name="Kahn D."/>
            <person name="Kiss E."/>
            <person name="Lelaure V."/>
            <person name="Masuy D."/>
            <person name="Pohl T."/>
            <person name="Portetelle D."/>
            <person name="Puehler A."/>
            <person name="Purnelle B."/>
            <person name="Ramsperger U."/>
            <person name="Renard C."/>
            <person name="Thebault P."/>
            <person name="Vandenbol M."/>
            <person name="Weidner S."/>
            <person name="Galibert F."/>
        </authorList>
    </citation>
    <scope>NUCLEOTIDE SEQUENCE [LARGE SCALE GENOMIC DNA]</scope>
    <source>
        <strain>1021</strain>
    </source>
</reference>
<reference key="3">
    <citation type="journal article" date="2001" name="Science">
        <title>The composite genome of the legume symbiont Sinorhizobium meliloti.</title>
        <authorList>
            <person name="Galibert F."/>
            <person name="Finan T.M."/>
            <person name="Long S.R."/>
            <person name="Puehler A."/>
            <person name="Abola P."/>
            <person name="Ampe F."/>
            <person name="Barloy-Hubler F."/>
            <person name="Barnett M.J."/>
            <person name="Becker A."/>
            <person name="Boistard P."/>
            <person name="Bothe G."/>
            <person name="Boutry M."/>
            <person name="Bowser L."/>
            <person name="Buhrmester J."/>
            <person name="Cadieu E."/>
            <person name="Capela D."/>
            <person name="Chain P."/>
            <person name="Cowie A."/>
            <person name="Davis R.W."/>
            <person name="Dreano S."/>
            <person name="Federspiel N.A."/>
            <person name="Fisher R.F."/>
            <person name="Gloux S."/>
            <person name="Godrie T."/>
            <person name="Goffeau A."/>
            <person name="Golding B."/>
            <person name="Gouzy J."/>
            <person name="Gurjal M."/>
            <person name="Hernandez-Lucas I."/>
            <person name="Hong A."/>
            <person name="Huizar L."/>
            <person name="Hyman R.W."/>
            <person name="Jones T."/>
            <person name="Kahn D."/>
            <person name="Kahn M.L."/>
            <person name="Kalman S."/>
            <person name="Keating D.H."/>
            <person name="Kiss E."/>
            <person name="Komp C."/>
            <person name="Lelaure V."/>
            <person name="Masuy D."/>
            <person name="Palm C."/>
            <person name="Peck M.C."/>
            <person name="Pohl T.M."/>
            <person name="Portetelle D."/>
            <person name="Purnelle B."/>
            <person name="Ramsperger U."/>
            <person name="Surzycki R."/>
            <person name="Thebault P."/>
            <person name="Vandenbol M."/>
            <person name="Vorhoelter F.J."/>
            <person name="Weidner S."/>
            <person name="Wells D.H."/>
            <person name="Wong K."/>
            <person name="Yeh K.-C."/>
            <person name="Batut J."/>
        </authorList>
    </citation>
    <scope>NUCLEOTIDE SEQUENCE [LARGE SCALE GENOMIC DNA]</scope>
    <source>
        <strain>1021</strain>
    </source>
</reference>
<protein>
    <recommendedName>
        <fullName>Flagellar motor switch protein FliG</fullName>
    </recommendedName>
</protein>
<gene>
    <name type="primary">fliG</name>
    <name type="ordered locus">R00651</name>
    <name type="ORF">SMc03019</name>
</gene>